<name>RS7_SHOC1</name>
<comment type="function">
    <text evidence="1">One of the primary rRNA binding proteins, it binds directly to 16S rRNA where it nucleates assembly of the head domain of the 30S subunit. Is located at the subunit interface close to the decoding center, probably blocks exit of the E-site tRNA.</text>
</comment>
<comment type="subunit">
    <text evidence="1">Part of the 30S ribosomal subunit. Contacts proteins S9 and S11.</text>
</comment>
<comment type="similarity">
    <text evidence="1">Belongs to the universal ribosomal protein uS7 family.</text>
</comment>
<protein>
    <recommendedName>
        <fullName evidence="1">Small ribosomal subunit protein uS7</fullName>
    </recommendedName>
    <alternativeName>
        <fullName evidence="2">30S ribosomal protein S7</fullName>
    </alternativeName>
</protein>
<accession>Q5WLR6</accession>
<feature type="chain" id="PRO_0000124217" description="Small ribosomal subunit protein uS7">
    <location>
        <begin position="1"/>
        <end position="156"/>
    </location>
</feature>
<organism>
    <name type="scientific">Shouchella clausii (strain KSM-K16)</name>
    <name type="common">Alkalihalobacillus clausii</name>
    <dbReference type="NCBI Taxonomy" id="66692"/>
    <lineage>
        <taxon>Bacteria</taxon>
        <taxon>Bacillati</taxon>
        <taxon>Bacillota</taxon>
        <taxon>Bacilli</taxon>
        <taxon>Bacillales</taxon>
        <taxon>Bacillaceae</taxon>
        <taxon>Shouchella</taxon>
    </lineage>
</organism>
<reference key="1">
    <citation type="submission" date="2003-10" db="EMBL/GenBank/DDBJ databases">
        <title>The complete genome sequence of the alkaliphilic Bacillus clausii KSM-K16.</title>
        <authorList>
            <person name="Takaki Y."/>
            <person name="Kageyama Y."/>
            <person name="Shimamura S."/>
            <person name="Suzuki H."/>
            <person name="Nishi S."/>
            <person name="Hatada Y."/>
            <person name="Kawai S."/>
            <person name="Ito S."/>
            <person name="Horikoshi K."/>
        </authorList>
    </citation>
    <scope>NUCLEOTIDE SEQUENCE [LARGE SCALE GENOMIC DNA]</scope>
    <source>
        <strain>KSM-K16</strain>
    </source>
</reference>
<evidence type="ECO:0000255" key="1">
    <source>
        <dbReference type="HAMAP-Rule" id="MF_00480"/>
    </source>
</evidence>
<evidence type="ECO:0000305" key="2"/>
<gene>
    <name evidence="1" type="primary">rpsG</name>
    <name type="ordered locus">ABC0146</name>
</gene>
<dbReference type="EMBL" id="AP006627">
    <property type="protein sequence ID" value="BAD62689.1"/>
    <property type="molecule type" value="Genomic_DNA"/>
</dbReference>
<dbReference type="RefSeq" id="WP_011245010.1">
    <property type="nucleotide sequence ID" value="NC_006582.1"/>
</dbReference>
<dbReference type="SMR" id="Q5WLR6"/>
<dbReference type="STRING" id="66692.ABC0146"/>
<dbReference type="GeneID" id="86924182"/>
<dbReference type="KEGG" id="bcl:ABC0146"/>
<dbReference type="eggNOG" id="COG0049">
    <property type="taxonomic scope" value="Bacteria"/>
</dbReference>
<dbReference type="HOGENOM" id="CLU_072226_1_1_9"/>
<dbReference type="OrthoDB" id="9807653at2"/>
<dbReference type="Proteomes" id="UP000001168">
    <property type="component" value="Chromosome"/>
</dbReference>
<dbReference type="GO" id="GO:0015935">
    <property type="term" value="C:small ribosomal subunit"/>
    <property type="evidence" value="ECO:0007669"/>
    <property type="project" value="InterPro"/>
</dbReference>
<dbReference type="GO" id="GO:0019843">
    <property type="term" value="F:rRNA binding"/>
    <property type="evidence" value="ECO:0007669"/>
    <property type="project" value="UniProtKB-UniRule"/>
</dbReference>
<dbReference type="GO" id="GO:0003735">
    <property type="term" value="F:structural constituent of ribosome"/>
    <property type="evidence" value="ECO:0007669"/>
    <property type="project" value="InterPro"/>
</dbReference>
<dbReference type="GO" id="GO:0000049">
    <property type="term" value="F:tRNA binding"/>
    <property type="evidence" value="ECO:0007669"/>
    <property type="project" value="UniProtKB-UniRule"/>
</dbReference>
<dbReference type="GO" id="GO:0006412">
    <property type="term" value="P:translation"/>
    <property type="evidence" value="ECO:0007669"/>
    <property type="project" value="UniProtKB-UniRule"/>
</dbReference>
<dbReference type="CDD" id="cd14869">
    <property type="entry name" value="uS7_Bacteria"/>
    <property type="match status" value="1"/>
</dbReference>
<dbReference type="FunFam" id="1.10.455.10:FF:000001">
    <property type="entry name" value="30S ribosomal protein S7"/>
    <property type="match status" value="1"/>
</dbReference>
<dbReference type="Gene3D" id="1.10.455.10">
    <property type="entry name" value="Ribosomal protein S7 domain"/>
    <property type="match status" value="1"/>
</dbReference>
<dbReference type="HAMAP" id="MF_00480_B">
    <property type="entry name" value="Ribosomal_uS7_B"/>
    <property type="match status" value="1"/>
</dbReference>
<dbReference type="InterPro" id="IPR000235">
    <property type="entry name" value="Ribosomal_uS7"/>
</dbReference>
<dbReference type="InterPro" id="IPR005717">
    <property type="entry name" value="Ribosomal_uS7_bac/org-type"/>
</dbReference>
<dbReference type="InterPro" id="IPR020606">
    <property type="entry name" value="Ribosomal_uS7_CS"/>
</dbReference>
<dbReference type="InterPro" id="IPR023798">
    <property type="entry name" value="Ribosomal_uS7_dom"/>
</dbReference>
<dbReference type="InterPro" id="IPR036823">
    <property type="entry name" value="Ribosomal_uS7_dom_sf"/>
</dbReference>
<dbReference type="NCBIfam" id="TIGR01029">
    <property type="entry name" value="rpsG_bact"/>
    <property type="match status" value="1"/>
</dbReference>
<dbReference type="PANTHER" id="PTHR11205">
    <property type="entry name" value="RIBOSOMAL PROTEIN S7"/>
    <property type="match status" value="1"/>
</dbReference>
<dbReference type="Pfam" id="PF00177">
    <property type="entry name" value="Ribosomal_S7"/>
    <property type="match status" value="1"/>
</dbReference>
<dbReference type="PIRSF" id="PIRSF002122">
    <property type="entry name" value="RPS7p_RPS7a_RPS5e_RPS7o"/>
    <property type="match status" value="1"/>
</dbReference>
<dbReference type="SUPFAM" id="SSF47973">
    <property type="entry name" value="Ribosomal protein S7"/>
    <property type="match status" value="1"/>
</dbReference>
<dbReference type="PROSITE" id="PS00052">
    <property type="entry name" value="RIBOSOMAL_S7"/>
    <property type="match status" value="1"/>
</dbReference>
<keyword id="KW-1185">Reference proteome</keyword>
<keyword id="KW-0687">Ribonucleoprotein</keyword>
<keyword id="KW-0689">Ribosomal protein</keyword>
<keyword id="KW-0694">RNA-binding</keyword>
<keyword id="KW-0699">rRNA-binding</keyword>
<keyword id="KW-0820">tRNA-binding</keyword>
<proteinExistence type="inferred from homology"/>
<sequence>MPRKGPVARRDVLPDPIYNSKLVTRLINRIMVDGKRGTAQTILYNAFELVKERSGNDPMEVFDQALKNIMPVLEVKARRVGGSNYQVPIEVKPERRTTLGLRWLVNYARLRGEKTMEERLANEILDAANNAGAAVKKREDTHKMAEANKAFAHYRW</sequence>